<name>RS2_METMA</name>
<proteinExistence type="inferred from homology"/>
<keyword id="KW-0687">Ribonucleoprotein</keyword>
<keyword id="KW-0689">Ribosomal protein</keyword>
<evidence type="ECO:0000255" key="1">
    <source>
        <dbReference type="HAMAP-Rule" id="MF_00291"/>
    </source>
</evidence>
<evidence type="ECO:0000256" key="2">
    <source>
        <dbReference type="SAM" id="MobiDB-lite"/>
    </source>
</evidence>
<evidence type="ECO:0000305" key="3"/>
<dbReference type="EMBL" id="AE008384">
    <property type="protein sequence ID" value="AAM31456.1"/>
    <property type="molecule type" value="Genomic_DNA"/>
</dbReference>
<dbReference type="SMR" id="Q8PW41"/>
<dbReference type="KEGG" id="mma:MM_1760"/>
<dbReference type="PATRIC" id="fig|192952.21.peg.2036"/>
<dbReference type="eggNOG" id="arCOG04245">
    <property type="taxonomic scope" value="Archaea"/>
</dbReference>
<dbReference type="HOGENOM" id="CLU_058171_3_0_2"/>
<dbReference type="Proteomes" id="UP000000595">
    <property type="component" value="Chromosome"/>
</dbReference>
<dbReference type="GO" id="GO:0015935">
    <property type="term" value="C:small ribosomal subunit"/>
    <property type="evidence" value="ECO:0007669"/>
    <property type="project" value="InterPro"/>
</dbReference>
<dbReference type="GO" id="GO:0003735">
    <property type="term" value="F:structural constituent of ribosome"/>
    <property type="evidence" value="ECO:0007669"/>
    <property type="project" value="InterPro"/>
</dbReference>
<dbReference type="GO" id="GO:0006412">
    <property type="term" value="P:translation"/>
    <property type="evidence" value="ECO:0007669"/>
    <property type="project" value="UniProtKB-UniRule"/>
</dbReference>
<dbReference type="CDD" id="cd01425">
    <property type="entry name" value="RPS2"/>
    <property type="match status" value="1"/>
</dbReference>
<dbReference type="FunFam" id="3.40.50.10490:FF:000030">
    <property type="entry name" value="30S ribosomal protein S2"/>
    <property type="match status" value="1"/>
</dbReference>
<dbReference type="Gene3D" id="3.40.50.10490">
    <property type="entry name" value="Glucose-6-phosphate isomerase like protein, domain 1"/>
    <property type="match status" value="1"/>
</dbReference>
<dbReference type="HAMAP" id="MF_00291_A">
    <property type="entry name" value="Ribosomal_uS2_A"/>
    <property type="match status" value="1"/>
</dbReference>
<dbReference type="InterPro" id="IPR001865">
    <property type="entry name" value="Ribosomal_uS2"/>
</dbReference>
<dbReference type="InterPro" id="IPR023454">
    <property type="entry name" value="Ribosomal_uS2_arc"/>
</dbReference>
<dbReference type="InterPro" id="IPR018130">
    <property type="entry name" value="Ribosomal_uS2_CS"/>
</dbReference>
<dbReference type="InterPro" id="IPR005707">
    <property type="entry name" value="Ribosomal_uS2_euk/arc"/>
</dbReference>
<dbReference type="InterPro" id="IPR023591">
    <property type="entry name" value="Ribosomal_uS2_flav_dom_sf"/>
</dbReference>
<dbReference type="NCBIfam" id="TIGR01012">
    <property type="entry name" value="uS2_euk_arch"/>
    <property type="match status" value="1"/>
</dbReference>
<dbReference type="PANTHER" id="PTHR11489">
    <property type="entry name" value="40S RIBOSOMAL PROTEIN SA"/>
    <property type="match status" value="1"/>
</dbReference>
<dbReference type="Pfam" id="PF00318">
    <property type="entry name" value="Ribosomal_S2"/>
    <property type="match status" value="2"/>
</dbReference>
<dbReference type="PRINTS" id="PR00395">
    <property type="entry name" value="RIBOSOMALS2"/>
</dbReference>
<dbReference type="SUPFAM" id="SSF52313">
    <property type="entry name" value="Ribosomal protein S2"/>
    <property type="match status" value="1"/>
</dbReference>
<dbReference type="PROSITE" id="PS00962">
    <property type="entry name" value="RIBOSOMAL_S2_1"/>
    <property type="match status" value="1"/>
</dbReference>
<dbReference type="PROSITE" id="PS00963">
    <property type="entry name" value="RIBOSOMAL_S2_2"/>
    <property type="match status" value="1"/>
</dbReference>
<sequence length="224" mass="24625">MAEAKPAPEKEAAVKTESVPVADDEAASAKEGSTSLVSIDEYLAAGVHIGTQQKTQDMMRFVYRVRTDGLYVLDIQSTDERIRVASKLLSHYDPSRILVVSSRQYGQHPARMFSRALGTRAMLGRFIPGSLTNPQIHGFFEPDVIIVTDPAGDAQVLKEASSIGVPVIALCDTNNLTSNVDLVIPTNNKGRKALSLVYWLLAREVSRLNNTPFNYEMTDFETPL</sequence>
<comment type="similarity">
    <text evidence="1">Belongs to the universal ribosomal protein uS2 family.</text>
</comment>
<feature type="chain" id="PRO_0000134325" description="Small ribosomal subunit protein uS2">
    <location>
        <begin position="1"/>
        <end position="224"/>
    </location>
</feature>
<feature type="region of interest" description="Disordered" evidence="2">
    <location>
        <begin position="1"/>
        <end position="32"/>
    </location>
</feature>
<feature type="compositionally biased region" description="Basic and acidic residues" evidence="2">
    <location>
        <begin position="1"/>
        <end position="14"/>
    </location>
</feature>
<reference key="1">
    <citation type="journal article" date="2002" name="J. Mol. Microbiol. Biotechnol.">
        <title>The genome of Methanosarcina mazei: evidence for lateral gene transfer between Bacteria and Archaea.</title>
        <authorList>
            <person name="Deppenmeier U."/>
            <person name="Johann A."/>
            <person name="Hartsch T."/>
            <person name="Merkl R."/>
            <person name="Schmitz R.A."/>
            <person name="Martinez-Arias R."/>
            <person name="Henne A."/>
            <person name="Wiezer A."/>
            <person name="Baeumer S."/>
            <person name="Jacobi C."/>
            <person name="Brueggemann H."/>
            <person name="Lienard T."/>
            <person name="Christmann A."/>
            <person name="Boemecke M."/>
            <person name="Steckel S."/>
            <person name="Bhattacharyya A."/>
            <person name="Lykidis A."/>
            <person name="Overbeek R."/>
            <person name="Klenk H.-P."/>
            <person name="Gunsalus R.P."/>
            <person name="Fritz H.-J."/>
            <person name="Gottschalk G."/>
        </authorList>
    </citation>
    <scope>NUCLEOTIDE SEQUENCE [LARGE SCALE GENOMIC DNA]</scope>
    <source>
        <strain>ATCC BAA-159 / DSM 3647 / Goe1 / Go1 / JCM 11833 / OCM 88</strain>
    </source>
</reference>
<gene>
    <name evidence="1" type="primary">rps2</name>
    <name type="ordered locus">MM_1760</name>
</gene>
<protein>
    <recommendedName>
        <fullName evidence="1">Small ribosomal subunit protein uS2</fullName>
    </recommendedName>
    <alternativeName>
        <fullName evidence="3">30S ribosomal protein S2</fullName>
    </alternativeName>
</protein>
<accession>Q8PW41</accession>
<organism>
    <name type="scientific">Methanosarcina mazei (strain ATCC BAA-159 / DSM 3647 / Goe1 / Go1 / JCM 11833 / OCM 88)</name>
    <name type="common">Methanosarcina frisia</name>
    <dbReference type="NCBI Taxonomy" id="192952"/>
    <lineage>
        <taxon>Archaea</taxon>
        <taxon>Methanobacteriati</taxon>
        <taxon>Methanobacteriota</taxon>
        <taxon>Stenosarchaea group</taxon>
        <taxon>Methanomicrobia</taxon>
        <taxon>Methanosarcinales</taxon>
        <taxon>Methanosarcinaceae</taxon>
        <taxon>Methanosarcina</taxon>
    </lineage>
</organism>